<comment type="subcellular location">
    <subcellularLocation>
        <location evidence="4">Secreted</location>
    </subcellularLocation>
</comment>
<comment type="tissue specificity">
    <text evidence="4">Expressed by the venom duct.</text>
</comment>
<comment type="domain">
    <text evidence="3">The cysteine framework is XI (C-C-CC-CC-C-C).</text>
</comment>
<comment type="similarity">
    <text evidence="3">Belongs to the conotoxin I3 superfamily.</text>
</comment>
<organism>
    <name type="scientific">Conus pulicarius</name>
    <name type="common">Flea-bitten cone</name>
    <dbReference type="NCBI Taxonomy" id="93154"/>
    <lineage>
        <taxon>Eukaryota</taxon>
        <taxon>Metazoa</taxon>
        <taxon>Spiralia</taxon>
        <taxon>Lophotrochozoa</taxon>
        <taxon>Mollusca</taxon>
        <taxon>Gastropoda</taxon>
        <taxon>Caenogastropoda</taxon>
        <taxon>Neogastropoda</taxon>
        <taxon>Conoidea</taxon>
        <taxon>Conidae</taxon>
        <taxon>Conus</taxon>
    </lineage>
</organism>
<dbReference type="EMBL" id="FJ531697">
    <property type="protein sequence ID" value="ACU30043.1"/>
    <property type="molecule type" value="mRNA"/>
</dbReference>
<dbReference type="SMR" id="D2DGD6"/>
<dbReference type="GO" id="GO:0005576">
    <property type="term" value="C:extracellular region"/>
    <property type="evidence" value="ECO:0007669"/>
    <property type="project" value="UniProtKB-SubCell"/>
</dbReference>
<dbReference type="GO" id="GO:0008200">
    <property type="term" value="F:ion channel inhibitor activity"/>
    <property type="evidence" value="ECO:0007669"/>
    <property type="project" value="InterPro"/>
</dbReference>
<dbReference type="GO" id="GO:0090729">
    <property type="term" value="F:toxin activity"/>
    <property type="evidence" value="ECO:0007669"/>
    <property type="project" value="UniProtKB-KW"/>
</dbReference>
<dbReference type="InterPro" id="IPR004214">
    <property type="entry name" value="Conotoxin"/>
</dbReference>
<dbReference type="Pfam" id="PF02950">
    <property type="entry name" value="Conotoxin"/>
    <property type="match status" value="1"/>
</dbReference>
<accession>D2DGD6</accession>
<protein>
    <recommendedName>
        <fullName>Conotoxin Pu11.1</fullName>
    </recommendedName>
</protein>
<keyword id="KW-1015">Disulfide bond</keyword>
<keyword id="KW-0964">Secreted</keyword>
<keyword id="KW-0732">Signal</keyword>
<keyword id="KW-0800">Toxin</keyword>
<proteinExistence type="inferred from homology"/>
<feature type="signal peptide" evidence="2">
    <location>
        <begin position="1"/>
        <end position="19"/>
    </location>
</feature>
<feature type="propeptide" id="PRO_0000392156" evidence="2">
    <location>
        <begin position="20"/>
        <end position="42"/>
    </location>
</feature>
<feature type="peptide" id="PRO_0000392157" description="Conotoxin Pu11.1">
    <location>
        <begin position="43"/>
        <end position="80"/>
    </location>
</feature>
<feature type="disulfide bond" evidence="1">
    <location>
        <begin position="46"/>
        <end position="60"/>
    </location>
</feature>
<feature type="disulfide bond" evidence="1">
    <location>
        <begin position="53"/>
        <end position="65"/>
    </location>
</feature>
<feature type="disulfide bond" evidence="1">
    <location>
        <begin position="59"/>
        <end position="72"/>
    </location>
</feature>
<feature type="disulfide bond" evidence="1">
    <location>
        <begin position="64"/>
        <end position="79"/>
    </location>
</feature>
<name>I3B1_CONPL</name>
<evidence type="ECO:0000250" key="1">
    <source>
        <dbReference type="UniProtKB" id="Q7Z094"/>
    </source>
</evidence>
<evidence type="ECO:0000255" key="2"/>
<evidence type="ECO:0000305" key="3"/>
<evidence type="ECO:0000305" key="4">
    <source>
    </source>
</evidence>
<reference key="1">
    <citation type="journal article" date="2009" name="Peptides">
        <title>New conotoxins define the novel I3-superfamily.</title>
        <authorList>
            <person name="Yuan D.D."/>
            <person name="Liu L."/>
            <person name="Shao X.X."/>
            <person name="Peng C."/>
            <person name="Chi C.W."/>
            <person name="Guo Z.Y."/>
        </authorList>
    </citation>
    <scope>NUCLEOTIDE SEQUENCE [MRNA]</scope>
</reference>
<sequence length="80" mass="8243">MKLVLAIVLILMLLSLSTGAEMSDNHASRSATALTDRLLGPKASICRGTGGRCTKDKHCCGWLCCGGPSVGCATSFAPCN</sequence>